<evidence type="ECO:0000255" key="1">
    <source>
        <dbReference type="HAMAP-Rule" id="MF_01702"/>
    </source>
</evidence>
<comment type="function">
    <text evidence="1">Part of the ABC transporter complex PstSACB involved in phosphate import. Responsible for energy coupling to the transport system.</text>
</comment>
<comment type="catalytic activity">
    <reaction evidence="1">
        <text>phosphate(out) + ATP + H2O = ADP + 2 phosphate(in) + H(+)</text>
        <dbReference type="Rhea" id="RHEA:24440"/>
        <dbReference type="ChEBI" id="CHEBI:15377"/>
        <dbReference type="ChEBI" id="CHEBI:15378"/>
        <dbReference type="ChEBI" id="CHEBI:30616"/>
        <dbReference type="ChEBI" id="CHEBI:43474"/>
        <dbReference type="ChEBI" id="CHEBI:456216"/>
        <dbReference type="EC" id="7.3.2.1"/>
    </reaction>
</comment>
<comment type="subunit">
    <text evidence="1">The complex is composed of two ATP-binding proteins (PstB), two transmembrane proteins (PstC and PstA) and a solute-binding protein (PstS).</text>
</comment>
<comment type="subcellular location">
    <subcellularLocation>
        <location evidence="1">Cell membrane</location>
        <topology evidence="1">Peripheral membrane protein</topology>
    </subcellularLocation>
</comment>
<comment type="similarity">
    <text evidence="1">Belongs to the ABC transporter superfamily. Phosphate importer (TC 3.A.1.7) family.</text>
</comment>
<reference key="1">
    <citation type="journal article" date="2002" name="Proc. Natl. Acad. Sci. U.S.A.">
        <title>Genome sequence of Streptococcus mutans UA159, a cariogenic dental pathogen.</title>
        <authorList>
            <person name="Ajdic D.J."/>
            <person name="McShan W.M."/>
            <person name="McLaughlin R.E."/>
            <person name="Savic G."/>
            <person name="Chang J."/>
            <person name="Carson M.B."/>
            <person name="Primeaux C."/>
            <person name="Tian R."/>
            <person name="Kenton S."/>
            <person name="Jia H.G."/>
            <person name="Lin S.P."/>
            <person name="Qian Y."/>
            <person name="Li S."/>
            <person name="Zhu H."/>
            <person name="Najar F.Z."/>
            <person name="Lai H."/>
            <person name="White J."/>
            <person name="Roe B.A."/>
            <person name="Ferretti J.J."/>
        </authorList>
    </citation>
    <scope>NUCLEOTIDE SEQUENCE [LARGE SCALE GENOMIC DNA]</scope>
    <source>
        <strain>ATCC 700610 / UA159</strain>
    </source>
</reference>
<keyword id="KW-0067">ATP-binding</keyword>
<keyword id="KW-1003">Cell membrane</keyword>
<keyword id="KW-0472">Membrane</keyword>
<keyword id="KW-0547">Nucleotide-binding</keyword>
<keyword id="KW-0592">Phosphate transport</keyword>
<keyword id="KW-1185">Reference proteome</keyword>
<keyword id="KW-1278">Translocase</keyword>
<keyword id="KW-0813">Transport</keyword>
<proteinExistence type="inferred from homology"/>
<organism>
    <name type="scientific">Streptococcus mutans serotype c (strain ATCC 700610 / UA159)</name>
    <dbReference type="NCBI Taxonomy" id="210007"/>
    <lineage>
        <taxon>Bacteria</taxon>
        <taxon>Bacillati</taxon>
        <taxon>Bacillota</taxon>
        <taxon>Bacilli</taxon>
        <taxon>Lactobacillales</taxon>
        <taxon>Streptococcaceae</taxon>
        <taxon>Streptococcus</taxon>
    </lineage>
</organism>
<accession>Q8DU24</accession>
<name>PSTB1_STRMU</name>
<gene>
    <name evidence="1" type="primary">pstB1</name>
    <name type="ordered locus">SMU_1134c</name>
</gene>
<sequence length="252" mass="28060">MTEPILKVNDLSVYYGKKKALHSVSIDFYPNEITSLIGPSGSGKSTLLRAINRMGDLNPEVTVTGSIIYNGHNIYSRRTDTVELRKEIGMVFQQPNPFPMTIYENVVYGLRLKGVKDKKILDEAVEKSLVGASIWDEVKDRLHDSAIGLSGGQQQRVCIARVLATSPKIILLDEPTSALDPISAGKIEDTLYGLKEKYTMLVVTRSMQQASRISNRTGFFLAGDLVEYGNTKEMFMNPQKQETEDYITGKFG</sequence>
<feature type="chain" id="PRO_0000092895" description="Phosphate import ATP-binding protein PstB 1">
    <location>
        <begin position="1"/>
        <end position="252"/>
    </location>
</feature>
<feature type="domain" description="ABC transporter" evidence="1">
    <location>
        <begin position="6"/>
        <end position="247"/>
    </location>
</feature>
<feature type="binding site" evidence="1">
    <location>
        <begin position="38"/>
        <end position="45"/>
    </location>
    <ligand>
        <name>ATP</name>
        <dbReference type="ChEBI" id="CHEBI:30616"/>
    </ligand>
</feature>
<protein>
    <recommendedName>
        <fullName evidence="1">Phosphate import ATP-binding protein PstB 1</fullName>
        <ecNumber evidence="1">7.3.2.1</ecNumber>
    </recommendedName>
    <alternativeName>
        <fullName evidence="1">ABC phosphate transporter 1</fullName>
    </alternativeName>
    <alternativeName>
        <fullName evidence="1">Phosphate-transporting ATPase 1</fullName>
    </alternativeName>
</protein>
<dbReference type="EC" id="7.3.2.1" evidence="1"/>
<dbReference type="EMBL" id="AE014133">
    <property type="protein sequence ID" value="AAN58826.1"/>
    <property type="molecule type" value="Genomic_DNA"/>
</dbReference>
<dbReference type="RefSeq" id="NP_721520.1">
    <property type="nucleotide sequence ID" value="NC_004350.2"/>
</dbReference>
<dbReference type="SMR" id="Q8DU24"/>
<dbReference type="STRING" id="210007.SMU_1134c"/>
<dbReference type="KEGG" id="smu:SMU_1134c"/>
<dbReference type="PATRIC" id="fig|210007.7.peg.1016"/>
<dbReference type="eggNOG" id="COG1117">
    <property type="taxonomic scope" value="Bacteria"/>
</dbReference>
<dbReference type="HOGENOM" id="CLU_000604_1_22_9"/>
<dbReference type="OrthoDB" id="9802185at2"/>
<dbReference type="PhylomeDB" id="Q8DU24"/>
<dbReference type="Proteomes" id="UP000002512">
    <property type="component" value="Chromosome"/>
</dbReference>
<dbReference type="GO" id="GO:0005886">
    <property type="term" value="C:plasma membrane"/>
    <property type="evidence" value="ECO:0007669"/>
    <property type="project" value="UniProtKB-SubCell"/>
</dbReference>
<dbReference type="GO" id="GO:0005524">
    <property type="term" value="F:ATP binding"/>
    <property type="evidence" value="ECO:0007669"/>
    <property type="project" value="UniProtKB-KW"/>
</dbReference>
<dbReference type="GO" id="GO:0016887">
    <property type="term" value="F:ATP hydrolysis activity"/>
    <property type="evidence" value="ECO:0007669"/>
    <property type="project" value="InterPro"/>
</dbReference>
<dbReference type="GO" id="GO:0015415">
    <property type="term" value="F:ATPase-coupled phosphate ion transmembrane transporter activity"/>
    <property type="evidence" value="ECO:0007669"/>
    <property type="project" value="UniProtKB-EC"/>
</dbReference>
<dbReference type="GO" id="GO:0035435">
    <property type="term" value="P:phosphate ion transmembrane transport"/>
    <property type="evidence" value="ECO:0007669"/>
    <property type="project" value="InterPro"/>
</dbReference>
<dbReference type="CDD" id="cd03260">
    <property type="entry name" value="ABC_PstB_phosphate_transporter"/>
    <property type="match status" value="1"/>
</dbReference>
<dbReference type="Gene3D" id="3.40.50.300">
    <property type="entry name" value="P-loop containing nucleotide triphosphate hydrolases"/>
    <property type="match status" value="1"/>
</dbReference>
<dbReference type="InterPro" id="IPR003593">
    <property type="entry name" value="AAA+_ATPase"/>
</dbReference>
<dbReference type="InterPro" id="IPR003439">
    <property type="entry name" value="ABC_transporter-like_ATP-bd"/>
</dbReference>
<dbReference type="InterPro" id="IPR017871">
    <property type="entry name" value="ABC_transporter-like_CS"/>
</dbReference>
<dbReference type="InterPro" id="IPR027417">
    <property type="entry name" value="P-loop_NTPase"/>
</dbReference>
<dbReference type="InterPro" id="IPR005670">
    <property type="entry name" value="PstB-like"/>
</dbReference>
<dbReference type="NCBIfam" id="TIGR00972">
    <property type="entry name" value="3a0107s01c2"/>
    <property type="match status" value="1"/>
</dbReference>
<dbReference type="PANTHER" id="PTHR43423">
    <property type="entry name" value="ABC TRANSPORTER I FAMILY MEMBER 17"/>
    <property type="match status" value="1"/>
</dbReference>
<dbReference type="PANTHER" id="PTHR43423:SF1">
    <property type="entry name" value="ABC TRANSPORTER I FAMILY MEMBER 17"/>
    <property type="match status" value="1"/>
</dbReference>
<dbReference type="Pfam" id="PF00005">
    <property type="entry name" value="ABC_tran"/>
    <property type="match status" value="1"/>
</dbReference>
<dbReference type="SMART" id="SM00382">
    <property type="entry name" value="AAA"/>
    <property type="match status" value="1"/>
</dbReference>
<dbReference type="SUPFAM" id="SSF52540">
    <property type="entry name" value="P-loop containing nucleoside triphosphate hydrolases"/>
    <property type="match status" value="1"/>
</dbReference>
<dbReference type="PROSITE" id="PS00211">
    <property type="entry name" value="ABC_TRANSPORTER_1"/>
    <property type="match status" value="1"/>
</dbReference>
<dbReference type="PROSITE" id="PS50893">
    <property type="entry name" value="ABC_TRANSPORTER_2"/>
    <property type="match status" value="1"/>
</dbReference>
<dbReference type="PROSITE" id="PS51238">
    <property type="entry name" value="PSTB"/>
    <property type="match status" value="1"/>
</dbReference>